<evidence type="ECO:0000255" key="1">
    <source>
        <dbReference type="HAMAP-Rule" id="MF_01413"/>
    </source>
</evidence>
<evidence type="ECO:0000255" key="2">
    <source>
        <dbReference type="PROSITE-ProRule" id="PRU00543"/>
    </source>
</evidence>
<evidence type="ECO:0000256" key="3">
    <source>
        <dbReference type="SAM" id="MobiDB-lite"/>
    </source>
</evidence>
<proteinExistence type="inferred from homology"/>
<comment type="function">
    <text evidence="1">Pore-forming subunit of a potassium efflux system that confers protection against electrophiles. Catalyzes K(+)/H(+) antiport.</text>
</comment>
<comment type="subunit">
    <text evidence="1">Homodimer. Interacts with the regulatory subunit KefF.</text>
</comment>
<comment type="subcellular location">
    <subcellularLocation>
        <location evidence="1">Cell inner membrane</location>
        <topology evidence="1">Multi-pass membrane protein</topology>
    </subcellularLocation>
</comment>
<comment type="similarity">
    <text evidence="1">Belongs to the monovalent cation:proton antiporter 2 (CPA2) transporter (TC 2.A.37) family. KefC subfamily.</text>
</comment>
<dbReference type="EMBL" id="CP001396">
    <property type="protein sequence ID" value="ACR64087.1"/>
    <property type="molecule type" value="Genomic_DNA"/>
</dbReference>
<dbReference type="RefSeq" id="WP_000377098.1">
    <property type="nucleotide sequence ID" value="NC_012759.1"/>
</dbReference>
<dbReference type="SMR" id="C4ZPX3"/>
<dbReference type="KEGG" id="ebw:BWG_0045"/>
<dbReference type="HOGENOM" id="CLU_005126_9_3_6"/>
<dbReference type="GO" id="GO:0005886">
    <property type="term" value="C:plasma membrane"/>
    <property type="evidence" value="ECO:0007669"/>
    <property type="project" value="UniProtKB-SubCell"/>
</dbReference>
<dbReference type="GO" id="GO:0019899">
    <property type="term" value="F:enzyme binding"/>
    <property type="evidence" value="ECO:0007669"/>
    <property type="project" value="InterPro"/>
</dbReference>
<dbReference type="GO" id="GO:0015503">
    <property type="term" value="F:glutathione-regulated potassium exporter activity"/>
    <property type="evidence" value="ECO:0007669"/>
    <property type="project" value="UniProtKB-UniRule"/>
</dbReference>
<dbReference type="GO" id="GO:0015643">
    <property type="term" value="F:toxic substance binding"/>
    <property type="evidence" value="ECO:0007669"/>
    <property type="project" value="InterPro"/>
</dbReference>
<dbReference type="GO" id="GO:1902600">
    <property type="term" value="P:proton transmembrane transport"/>
    <property type="evidence" value="ECO:0007669"/>
    <property type="project" value="InterPro"/>
</dbReference>
<dbReference type="GO" id="GO:0051595">
    <property type="term" value="P:response to methylglyoxal"/>
    <property type="evidence" value="ECO:0007669"/>
    <property type="project" value="InterPro"/>
</dbReference>
<dbReference type="FunFam" id="1.20.1530.20:FF:000001">
    <property type="entry name" value="Glutathione-regulated potassium-efflux system protein KefB"/>
    <property type="match status" value="1"/>
</dbReference>
<dbReference type="FunFam" id="3.40.50.720:FF:000036">
    <property type="entry name" value="Glutathione-regulated potassium-efflux system protein KefB"/>
    <property type="match status" value="1"/>
</dbReference>
<dbReference type="Gene3D" id="1.20.1530.20">
    <property type="match status" value="1"/>
</dbReference>
<dbReference type="Gene3D" id="3.40.50.720">
    <property type="entry name" value="NAD(P)-binding Rossmann-like Domain"/>
    <property type="match status" value="1"/>
</dbReference>
<dbReference type="HAMAP" id="MF_01413">
    <property type="entry name" value="K_H_efflux_KefC"/>
    <property type="match status" value="1"/>
</dbReference>
<dbReference type="InterPro" id="IPR006153">
    <property type="entry name" value="Cation/H_exchanger_TM"/>
</dbReference>
<dbReference type="InterPro" id="IPR004771">
    <property type="entry name" value="K/H_exchanger"/>
</dbReference>
<dbReference type="InterPro" id="IPR023941">
    <property type="entry name" value="K_H_efflux_KefC"/>
</dbReference>
<dbReference type="InterPro" id="IPR006036">
    <property type="entry name" value="K_uptake_TrkA"/>
</dbReference>
<dbReference type="InterPro" id="IPR038770">
    <property type="entry name" value="Na+/solute_symporter_sf"/>
</dbReference>
<dbReference type="InterPro" id="IPR036291">
    <property type="entry name" value="NAD(P)-bd_dom_sf"/>
</dbReference>
<dbReference type="InterPro" id="IPR003148">
    <property type="entry name" value="RCK_N"/>
</dbReference>
<dbReference type="NCBIfam" id="TIGR00932">
    <property type="entry name" value="2a37"/>
    <property type="match status" value="1"/>
</dbReference>
<dbReference type="NCBIfam" id="NF002924">
    <property type="entry name" value="PRK03562.1"/>
    <property type="match status" value="1"/>
</dbReference>
<dbReference type="PANTHER" id="PTHR46157:SF3">
    <property type="entry name" value="GLUTATHIONE-REGULATED POTASSIUM-EFFLUX SYSTEM PROTEIN KEFC"/>
    <property type="match status" value="1"/>
</dbReference>
<dbReference type="PANTHER" id="PTHR46157">
    <property type="entry name" value="K(+) EFFLUX ANTIPORTER 3, CHLOROPLASTIC"/>
    <property type="match status" value="1"/>
</dbReference>
<dbReference type="Pfam" id="PF00999">
    <property type="entry name" value="Na_H_Exchanger"/>
    <property type="match status" value="1"/>
</dbReference>
<dbReference type="Pfam" id="PF02254">
    <property type="entry name" value="TrkA_N"/>
    <property type="match status" value="1"/>
</dbReference>
<dbReference type="PRINTS" id="PR00335">
    <property type="entry name" value="KUPTAKETRKA"/>
</dbReference>
<dbReference type="SUPFAM" id="SSF51735">
    <property type="entry name" value="NAD(P)-binding Rossmann-fold domains"/>
    <property type="match status" value="1"/>
</dbReference>
<dbReference type="PROSITE" id="PS51201">
    <property type="entry name" value="RCK_N"/>
    <property type="match status" value="1"/>
</dbReference>
<sequence>MDSHTLIQALIYLGSAALIVPIAVRLGLGSVLGYLIAGCIIGPWGLRLVTDAESILHFAEIGVVLMLFIIGLELDPQRLWKLRAAVFGCGALQMVICGGLLGLFCMLLGLRWQVAELIGMTLALSSTAIAMQAMNERNLMVTQMGRSAFAVLLFQDIAAIPLVAMIPLLATSSASTTMGAFALSALKVAGALVLVVLLGRYVTRPALRFVARSGLREVFSAVALFLVFGFGLLLEEVGLSMAMGAFLAGVLLASSEYRHALESDIEPFKGLLLGLFFIGVGMSIDFGTLLENPLRIVILLLGFLIIKIAMLWLIARPLQVPNKQRRWFAVLLGQGSEFAFVVFGAAQMANVLEPEWAKSLTLAVALSMAATPILLVILNRLEQSSTEEAREADEIDEEQPRVIIAGFGRFGQITGRLLLSSGVKMVVLDHDPDHIETLRKFGMKVFYGDATRMDLLESAGAAKAEVLINAIDDPQTNLQLTEMVKEHFPHLQIIARARDVDHYIRLRQAGVEKPERETFEGALKTGRLALESLGLGPYEARERADVFRRFNIQMVEEMAMVENDTKARAAVYKRTSAMLSEIITEDREHLSLIQRHGWQGTEEGKHTGNMADEPETKPSS</sequence>
<accession>C4ZPX3</accession>
<name>KEFC_ECOBW</name>
<feature type="chain" id="PRO_1000215224" description="Glutathione-regulated potassium-efflux system protein KefC">
    <location>
        <begin position="1"/>
        <end position="620"/>
    </location>
</feature>
<feature type="transmembrane region" description="Helical" evidence="1">
    <location>
        <begin position="4"/>
        <end position="24"/>
    </location>
</feature>
<feature type="transmembrane region" description="Helical" evidence="1">
    <location>
        <begin position="26"/>
        <end position="46"/>
    </location>
</feature>
<feature type="transmembrane region" description="Helical" evidence="1">
    <location>
        <begin position="54"/>
        <end position="74"/>
    </location>
</feature>
<feature type="transmembrane region" description="Helical" evidence="1">
    <location>
        <begin position="90"/>
        <end position="110"/>
    </location>
</feature>
<feature type="transmembrane region" description="Helical" evidence="1">
    <location>
        <begin position="114"/>
        <end position="134"/>
    </location>
</feature>
<feature type="transmembrane region" description="Helical" evidence="1">
    <location>
        <begin position="149"/>
        <end position="169"/>
    </location>
</feature>
<feature type="transmembrane region" description="Helical" evidence="1">
    <location>
        <begin position="178"/>
        <end position="198"/>
    </location>
</feature>
<feature type="transmembrane region" description="Helical" evidence="1">
    <location>
        <begin position="218"/>
        <end position="238"/>
    </location>
</feature>
<feature type="transmembrane region" description="Helical" evidence="1">
    <location>
        <begin position="270"/>
        <end position="290"/>
    </location>
</feature>
<feature type="transmembrane region" description="Helical" evidence="1">
    <location>
        <begin position="294"/>
        <end position="314"/>
    </location>
</feature>
<feature type="transmembrane region" description="Helical" evidence="1">
    <location>
        <begin position="327"/>
        <end position="347"/>
    </location>
</feature>
<feature type="transmembrane region" description="Helical" evidence="1">
    <location>
        <begin position="359"/>
        <end position="379"/>
    </location>
</feature>
<feature type="domain" description="RCK N-terminal" evidence="2">
    <location>
        <begin position="399"/>
        <end position="518"/>
    </location>
</feature>
<feature type="region of interest" description="Disordered" evidence="3">
    <location>
        <begin position="597"/>
        <end position="620"/>
    </location>
</feature>
<organism>
    <name type="scientific">Escherichia coli (strain K12 / MC4100 / BW2952)</name>
    <dbReference type="NCBI Taxonomy" id="595496"/>
    <lineage>
        <taxon>Bacteria</taxon>
        <taxon>Pseudomonadati</taxon>
        <taxon>Pseudomonadota</taxon>
        <taxon>Gammaproteobacteria</taxon>
        <taxon>Enterobacterales</taxon>
        <taxon>Enterobacteriaceae</taxon>
        <taxon>Escherichia</taxon>
    </lineage>
</organism>
<protein>
    <recommendedName>
        <fullName evidence="1">Glutathione-regulated potassium-efflux system protein KefC</fullName>
    </recommendedName>
    <alternativeName>
        <fullName evidence="1">K(+)/H(+) antiporter</fullName>
    </alternativeName>
</protein>
<gene>
    <name evidence="1" type="primary">kefC</name>
    <name type="ordered locus">BWG_0045</name>
</gene>
<reference key="1">
    <citation type="journal article" date="2009" name="J. Bacteriol.">
        <title>Genomic sequencing reveals regulatory mutations and recombinational events in the widely used MC4100 lineage of Escherichia coli K-12.</title>
        <authorList>
            <person name="Ferenci T."/>
            <person name="Zhou Z."/>
            <person name="Betteridge T."/>
            <person name="Ren Y."/>
            <person name="Liu Y."/>
            <person name="Feng L."/>
            <person name="Reeves P.R."/>
            <person name="Wang L."/>
        </authorList>
    </citation>
    <scope>NUCLEOTIDE SEQUENCE [LARGE SCALE GENOMIC DNA]</scope>
    <source>
        <strain>K12 / MC4100 / BW2952</strain>
    </source>
</reference>
<keyword id="KW-0050">Antiport</keyword>
<keyword id="KW-0997">Cell inner membrane</keyword>
<keyword id="KW-1003">Cell membrane</keyword>
<keyword id="KW-0406">Ion transport</keyword>
<keyword id="KW-0472">Membrane</keyword>
<keyword id="KW-0630">Potassium</keyword>
<keyword id="KW-0633">Potassium transport</keyword>
<keyword id="KW-0812">Transmembrane</keyword>
<keyword id="KW-1133">Transmembrane helix</keyword>
<keyword id="KW-0813">Transport</keyword>